<proteinExistence type="evidence at protein level"/>
<feature type="signal peptide" evidence="13">
    <location>
        <begin position="1"/>
        <end position="17"/>
    </location>
</feature>
<feature type="chain" id="PRO_0000232521" description="Envelopment polyprotein">
    <location>
        <begin position="18"/>
        <end position="1008"/>
    </location>
</feature>
<feature type="chain" id="PRO_0000036853" description="Glycoprotein N">
    <location>
        <begin position="18"/>
        <end position="513"/>
    </location>
</feature>
<feature type="chain" id="PRO_0000036855" description="Glycoprotein C">
    <location>
        <begin position="514"/>
        <end position="1008"/>
    </location>
</feature>
<feature type="topological domain" description="Lumenal" evidence="5">
    <location>
        <begin position="18"/>
        <end position="394"/>
    </location>
</feature>
<feature type="transmembrane region" description="Helical" evidence="5">
    <location>
        <begin position="395"/>
        <end position="415"/>
    </location>
</feature>
<feature type="topological domain" description="Cytoplasmic" evidence="16 17">
    <location>
        <begin position="416"/>
        <end position="496"/>
    </location>
</feature>
<feature type="topological domain" description="Lumenal" evidence="5">
    <location>
        <begin position="514"/>
        <end position="977"/>
    </location>
</feature>
<feature type="transmembrane region" description="Helical" evidence="5">
    <location>
        <begin position="978"/>
        <end position="998"/>
    </location>
</feature>
<feature type="topological domain" description="Cytoplasmic" evidence="16">
    <location>
        <begin position="999"/>
        <end position="1008"/>
    </location>
</feature>
<feature type="region of interest" description="Golgi retention signal" evidence="17 18">
    <location>
        <begin position="419"/>
        <end position="465"/>
    </location>
</feature>
<feature type="region of interest" description="Important for correct targeting of the glycoproteins to the Golgi complex but not for heterodimerization" evidence="8">
    <location>
        <begin position="461"/>
        <end position="465"/>
    </location>
</feature>
<feature type="region of interest" description="Internal signal sequence for glycoprotein C" evidence="16">
    <location>
        <begin position="497"/>
        <end position="513"/>
    </location>
</feature>
<feature type="region of interest" description="Fusion loop" evidence="4">
    <location>
        <begin position="601"/>
        <end position="607"/>
    </location>
</feature>
<feature type="region of interest" description="Fusion loop" evidence="3">
    <location>
        <begin position="644"/>
        <end position="655"/>
    </location>
</feature>
<feature type="site" description="Cleavage; by host signal peptidase" evidence="24">
    <location>
        <begin position="513"/>
        <end position="514"/>
    </location>
</feature>
<feature type="site" description="Important for glycoprotein C and glycoprotein N subcellular location" evidence="8">
    <location>
        <position position="1006"/>
    </location>
</feature>
<feature type="glycosylation site" description="N-linked (GlcNAc...) asparagine; by host" evidence="5">
    <location>
        <position position="34"/>
    </location>
</feature>
<feature type="glycosylation site" description="N-linked (GlcNAc...) asparagine; by host" evidence="5">
    <location>
        <position position="70"/>
    </location>
</feature>
<feature type="glycosylation site" description="N-linked (GlcNAc...) asparagine; by host" evidence="5">
    <location>
        <position position="108"/>
    </location>
</feature>
<feature type="glycosylation site" description="N-linked (GlcNAc...) asparagine; by host" evidence="5">
    <location>
        <position position="208"/>
    </location>
</feature>
<feature type="glycosylation site" description="N-linked (GlcNAc...) asparagine; by host" evidence="5">
    <location>
        <position position="691"/>
    </location>
</feature>
<feature type="glycosylation site" description="N-linked (GlcNAc...) asparagine; by host" evidence="5">
    <location>
        <position position="696"/>
    </location>
</feature>
<feature type="glycosylation site" description="N-linked (GlcNAc...) asparagine; by host" evidence="5">
    <location>
        <position position="912"/>
    </location>
</feature>
<feature type="glycosylation site" description="N-linked (GlcNAc...) asparagine; by host" evidence="5">
    <location>
        <position position="949"/>
    </location>
</feature>
<feature type="disulfide bond" evidence="4">
    <location>
        <begin position="138"/>
        <end position="269"/>
    </location>
</feature>
<feature type="disulfide bond" evidence="4">
    <location>
        <begin position="156"/>
        <end position="166"/>
    </location>
</feature>
<feature type="disulfide bond" evidence="4">
    <location>
        <begin position="206"/>
        <end position="247"/>
    </location>
</feature>
<feature type="disulfide bond" evidence="4">
    <location>
        <begin position="216"/>
        <end position="226"/>
    </location>
</feature>
<feature type="disulfide bond" evidence="4">
    <location>
        <begin position="233"/>
        <end position="238"/>
    </location>
</feature>
<feature type="disulfide bond" evidence="4">
    <location>
        <begin position="292"/>
        <end position="295"/>
    </location>
</feature>
<feature type="disulfide bond" evidence="4">
    <location>
        <begin position="299"/>
        <end position="368"/>
    </location>
</feature>
<feature type="disulfide bond" evidence="4">
    <location>
        <begin position="319"/>
        <end position="324"/>
    </location>
</feature>
<feature type="disulfide bond" evidence="3">
    <location>
        <begin position="514"/>
        <end position="555"/>
    </location>
</feature>
<feature type="disulfide bond" evidence="3">
    <location>
        <begin position="527"/>
        <end position="537"/>
    </location>
</feature>
<feature type="disulfide bond" evidence="3">
    <location>
        <begin position="580"/>
        <end position="677"/>
    </location>
</feature>
<feature type="disulfide bond" evidence="3">
    <location>
        <begin position="595"/>
        <end position="789"/>
    </location>
</feature>
<feature type="disulfide bond" evidence="3">
    <location>
        <begin position="601"/>
        <end position="650"/>
    </location>
</feature>
<feature type="disulfide bond" evidence="3">
    <location>
        <begin position="607"/>
        <end position="657"/>
    </location>
</feature>
<feature type="disulfide bond" evidence="3">
    <location>
        <begin position="612"/>
        <end position="639"/>
    </location>
</feature>
<feature type="disulfide bond" evidence="3">
    <location>
        <begin position="643"/>
        <end position="648"/>
    </location>
</feature>
<feature type="disulfide bond" evidence="4">
    <location>
        <begin position="728"/>
        <end position="742"/>
    </location>
</feature>
<feature type="disulfide bond" evidence="3">
    <location>
        <begin position="758"/>
        <end position="771"/>
    </location>
</feature>
<feature type="disulfide bond" evidence="3">
    <location>
        <begin position="851"/>
        <end position="924"/>
    </location>
</feature>
<feature type="disulfide bond" evidence="3">
    <location>
        <begin position="861"/>
        <end position="864"/>
    </location>
</feature>
<feature type="mutagenesis site" description="Loss of budding into the Golgi membrane; no effect on Golgi subcellular location." evidence="8">
    <original>L</original>
    <variation>A</variation>
    <location>
        <position position="438"/>
    </location>
</feature>
<feature type="mutagenesis site" description="Budding defect; no effect on Golgi subcellular location." evidence="8">
    <original>L</original>
    <variation>A</variation>
    <location>
        <position position="439"/>
    </location>
</feature>
<feature type="mutagenesis site" description="Decreased palmitoylation." evidence="17">
    <original>C</original>
    <variation>A</variation>
    <location>
        <position position="440"/>
    </location>
</feature>
<feature type="mutagenesis site" description="Decreased palmitoylation." evidence="17">
    <original>C</original>
    <variation>A</variation>
    <location>
        <position position="443"/>
    </location>
</feature>
<feature type="mutagenesis site" description="Mislocalization of glycoprotein C and glycoprotein N to the plasma membrane." evidence="8">
    <original>K</original>
    <variation>A</variation>
    <location>
        <position position="1006"/>
    </location>
</feature>
<keyword id="KW-0903">Direct protein sequencing</keyword>
<keyword id="KW-1015">Disulfide bond</keyword>
<keyword id="KW-1170">Fusion of virus membrane with host endosomal membrane</keyword>
<keyword id="KW-1168">Fusion of virus membrane with host membrane</keyword>
<keyword id="KW-0325">Glycoprotein</keyword>
<keyword id="KW-1038">Host endoplasmic reticulum</keyword>
<keyword id="KW-1040">Host Golgi apparatus</keyword>
<keyword id="KW-1043">Host membrane</keyword>
<keyword id="KW-0945">Host-virus interaction</keyword>
<keyword id="KW-0449">Lipoprotein</keyword>
<keyword id="KW-0472">Membrane</keyword>
<keyword id="KW-0564">Palmitate</keyword>
<keyword id="KW-1185">Reference proteome</keyword>
<keyword id="KW-0732">Signal</keyword>
<keyword id="KW-0812">Transmembrane</keyword>
<keyword id="KW-1133">Transmembrane helix</keyword>
<keyword id="KW-1161">Viral attachment to host cell</keyword>
<keyword id="KW-1234">Viral attachment to host entry receptor</keyword>
<keyword id="KW-1162">Viral penetration into host cytoplasm</keyword>
<keyword id="KW-0946">Virion</keyword>
<keyword id="KW-1160">Virus entry into host cell</keyword>
<gene>
    <name type="primary">GP</name>
</gene>
<accession>P09613</accession>
<name>GP_UUKS</name>
<evidence type="ECO:0000250" key="1">
    <source>
        <dbReference type="UniProtKB" id="J3WAX0"/>
    </source>
</evidence>
<evidence type="ECO:0000250" key="2">
    <source>
        <dbReference type="UniProtKB" id="P03518"/>
    </source>
</evidence>
<evidence type="ECO:0000250" key="3">
    <source>
        <dbReference type="UniProtKB" id="P21401"/>
    </source>
</evidence>
<evidence type="ECO:0000250" key="4">
    <source>
        <dbReference type="UniProtKB" id="R4V2Q5"/>
    </source>
</evidence>
<evidence type="ECO:0000255" key="5"/>
<evidence type="ECO:0000269" key="6">
    <source>
    </source>
</evidence>
<evidence type="ECO:0000269" key="7">
    <source>
    </source>
</evidence>
<evidence type="ECO:0000269" key="8">
    <source>
    </source>
</evidence>
<evidence type="ECO:0000269" key="9">
    <source>
    </source>
</evidence>
<evidence type="ECO:0000269" key="10">
    <source>
    </source>
</evidence>
<evidence type="ECO:0000269" key="11">
    <source>
    </source>
</evidence>
<evidence type="ECO:0000269" key="12">
    <source>
    </source>
</evidence>
<evidence type="ECO:0000269" key="13">
    <source>
    </source>
</evidence>
<evidence type="ECO:0000269" key="14">
    <source>
    </source>
</evidence>
<evidence type="ECO:0000269" key="15">
    <source>
    </source>
</evidence>
<evidence type="ECO:0000269" key="16">
    <source>
    </source>
</evidence>
<evidence type="ECO:0000269" key="17">
    <source>
    </source>
</evidence>
<evidence type="ECO:0000269" key="18">
    <source>
    </source>
</evidence>
<evidence type="ECO:0000303" key="19">
    <source>
    </source>
</evidence>
<evidence type="ECO:0000305" key="20"/>
<evidence type="ECO:0000305" key="21">
    <source>
    </source>
</evidence>
<evidence type="ECO:0000305" key="22">
    <source>
    </source>
</evidence>
<evidence type="ECO:0000305" key="23">
    <source>
    </source>
</evidence>
<evidence type="ECO:0000305" key="24">
    <source>
    </source>
</evidence>
<dbReference type="EMBL" id="M17417">
    <property type="protein sequence ID" value="AAA79512.1"/>
    <property type="molecule type" value="Genomic_RNA"/>
</dbReference>
<dbReference type="PIR" id="A28502">
    <property type="entry name" value="GNVUUK"/>
</dbReference>
<dbReference type="SMR" id="P09613"/>
<dbReference type="IntAct" id="P09613">
    <property type="interactions" value="40"/>
</dbReference>
<dbReference type="GlyCosmos" id="P09613">
    <property type="glycosylation" value="8 sites, No reported glycans"/>
</dbReference>
<dbReference type="KEGG" id="vg:2943072"/>
<dbReference type="Proteomes" id="UP000008595">
    <property type="component" value="Genome"/>
</dbReference>
<dbReference type="GO" id="GO:0044167">
    <property type="term" value="C:host cell endoplasmic reticulum membrane"/>
    <property type="evidence" value="ECO:0007669"/>
    <property type="project" value="UniProtKB-SubCell"/>
</dbReference>
<dbReference type="GO" id="GO:0044178">
    <property type="term" value="C:host cell Golgi membrane"/>
    <property type="evidence" value="ECO:0007669"/>
    <property type="project" value="UniProtKB-SubCell"/>
</dbReference>
<dbReference type="GO" id="GO:0016020">
    <property type="term" value="C:membrane"/>
    <property type="evidence" value="ECO:0007669"/>
    <property type="project" value="UniProtKB-KW"/>
</dbReference>
<dbReference type="GO" id="GO:0055036">
    <property type="term" value="C:virion membrane"/>
    <property type="evidence" value="ECO:0007669"/>
    <property type="project" value="UniProtKB-SubCell"/>
</dbReference>
<dbReference type="GO" id="GO:0098670">
    <property type="term" value="P:entry receptor-mediated virion attachment to host cell"/>
    <property type="evidence" value="ECO:0007669"/>
    <property type="project" value="UniProtKB-KW"/>
</dbReference>
<dbReference type="GO" id="GO:0039654">
    <property type="term" value="P:fusion of virus membrane with host endosome membrane"/>
    <property type="evidence" value="ECO:0007669"/>
    <property type="project" value="UniProtKB-KW"/>
</dbReference>
<dbReference type="GO" id="GO:0046718">
    <property type="term" value="P:symbiont entry into host cell"/>
    <property type="evidence" value="ECO:0007669"/>
    <property type="project" value="UniProtKB-KW"/>
</dbReference>
<dbReference type="GO" id="GO:0046760">
    <property type="term" value="P:viral budding from Golgi membrane"/>
    <property type="evidence" value="ECO:0000314"/>
    <property type="project" value="UniProtKB"/>
</dbReference>
<dbReference type="GO" id="GO:0039702">
    <property type="term" value="P:viral budding via host ESCRT complex"/>
    <property type="evidence" value="ECO:0000314"/>
    <property type="project" value="UniProtKB"/>
</dbReference>
<dbReference type="Gene3D" id="2.60.40.3770">
    <property type="match status" value="1"/>
</dbReference>
<dbReference type="Gene3D" id="2.60.98.50">
    <property type="match status" value="1"/>
</dbReference>
<dbReference type="InterPro" id="IPR043603">
    <property type="entry name" value="Phlebo_G2_C"/>
</dbReference>
<dbReference type="InterPro" id="IPR010826">
    <property type="entry name" value="Phlebovirus_G1"/>
</dbReference>
<dbReference type="InterPro" id="IPR009878">
    <property type="entry name" value="Phlebovirus_G2_fusion"/>
</dbReference>
<dbReference type="Pfam" id="PF19019">
    <property type="entry name" value="Phlebo_G2_C"/>
    <property type="match status" value="1"/>
</dbReference>
<dbReference type="Pfam" id="PF07243">
    <property type="entry name" value="Phlebovirus_G1"/>
    <property type="match status" value="1"/>
</dbReference>
<dbReference type="Pfam" id="PF07245">
    <property type="entry name" value="Phlebovirus_G2"/>
    <property type="match status" value="1"/>
</dbReference>
<protein>
    <recommendedName>
        <fullName>Envelopment polyprotein</fullName>
    </recommendedName>
    <alternativeName>
        <fullName>M polyprotein</fullName>
    </alternativeName>
    <alternativeName>
        <fullName evidence="19">p110</fullName>
    </alternativeName>
    <component>
        <recommendedName>
            <fullName evidence="3">Glycoprotein N</fullName>
            <shortName>Gn</shortName>
        </recommendedName>
        <alternativeName>
            <fullName>Glycoprotein G1</fullName>
        </alternativeName>
    </component>
    <component>
        <recommendedName>
            <fullName evidence="3">Glycoprotein C</fullName>
            <shortName>Gc</shortName>
        </recommendedName>
        <alternativeName>
            <fullName>Glycoprotein G2</fullName>
        </alternativeName>
    </component>
</protein>
<reference key="1">
    <citation type="journal article" date="1987" name="Virology">
        <title>Complete nucleotide sequence of the M RNA segment of Uukuniemi virus encoding the membrane glycoproteins G1 and G2.</title>
        <authorList>
            <person name="Ronnholm R."/>
            <person name="Pettersson R.F."/>
        </authorList>
    </citation>
    <scope>NUCLEOTIDE SEQUENCE [GENOMIC RNA]</scope>
    <scope>PROTEIN SEQUENCE OF 18-29 AND 514-525</scope>
</reference>
<reference key="2">
    <citation type="journal article" date="1991" name="J. Cell Biol.">
        <title>Formation and intracellular transport of a heterodimeric viral spike protein complex.</title>
        <authorList>
            <person name="Persson R."/>
            <person name="Pettersson R.F."/>
        </authorList>
    </citation>
    <scope>SUBUNIT (GLYCOPROTEIN N)</scope>
    <scope>SUBUNIT (GLYCOPROTEIN C)</scope>
    <scope>SUBCELLULAR LOCATION (GLYCOPROTEIN N)</scope>
    <scope>SUBCELLULAR LOCATION (GLYCOPROTEIN C)</scope>
    <scope>FUNCTION (GLYCOPROTEIN N)</scope>
    <scope>FUNCTION (GLYCOPROTEIN C)</scope>
</reference>
<reference key="3">
    <citation type="journal article" date="1992" name="J. Virol.">
        <title>Localization to the Golgi complex of Uukuniemi virus glycoproteins G1 and G2 expressed from cloned cDNAs.</title>
        <authorList>
            <person name="Roennholm R."/>
        </authorList>
    </citation>
    <scope>SUBUNIT (GLYCOPROTEIN N)</scope>
    <scope>SUBUNIT (GLYCOPROTEIN C)</scope>
    <scope>SUBCELLULAR LOCATION (GLYCOPROTEIN N)</scope>
    <scope>SUBCELLULAR LOCATION (GLYCOPROTEIN C)</scope>
</reference>
<reference key="4">
    <citation type="journal article" date="1995" name="Virus Res.">
        <title>The membrane glycoprotein G1 of Uukuniemi virus contains a signal for localization to the Golgi complex.</title>
        <authorList>
            <person name="Melin L."/>
            <person name="Persson R."/>
            <person name="Andersson A."/>
            <person name="Bergstroem A."/>
            <person name="Roennholm R."/>
            <person name="Pettersson R.F."/>
        </authorList>
    </citation>
    <scope>SUBCELLULAR LOCATION (GLYCOPROTEIN N)</scope>
    <scope>SUBCELLULAR LOCATION (GLYCOPROTEIN C)</scope>
</reference>
<reference key="5">
    <citation type="journal article" date="1995" name="Virology">
        <title>Homodimeric association of the spike glycoproteins G1 and G2 of Uukuniemi virus.</title>
        <authorList>
            <person name="Roenkae H."/>
            <person name="Hilden P."/>
            <person name="Von Bonsdorff C.H."/>
            <person name="Kuismanen E."/>
        </authorList>
    </citation>
    <scope>SUBUNIT (GLYCOPROTEIN N)</scope>
</reference>
<reference key="6">
    <citation type="journal article" date="1997" name="J. Virol.">
        <title>Processing and membrane topology of the spike proteins G1 and G2 of Uukuniemi virus.</title>
        <authorList>
            <person name="Andersson A.M."/>
            <person name="Melin L."/>
            <person name="Persson R."/>
            <person name="Raschperger E."/>
            <person name="Wikstrom L."/>
            <person name="Pettersson R.F."/>
        </authorList>
    </citation>
    <scope>PALMITOYLATION (GLYCOPROTEIN N)</scope>
    <scope>PALMITOYLATION (GLYCOPROTEIN C)</scope>
    <scope>TOPOLOGY (ENVELOPMENT POLYPROTEIN)</scope>
    <scope>PROTEOLYTIC CLEAVAGE (ENVELOPMENT POLYPROTEIN)</scope>
</reference>
<reference key="7">
    <citation type="journal article" date="1997" name="J. Virol.">
        <title>A retention signal necessary and sufficient for Golgi localization maps to the cytoplasmic tail of a Bunyaviridae (Uukuniemi virus) membrane glycoprotein.</title>
        <authorList>
            <person name="Andersson A.M."/>
            <person name="Melin L."/>
            <person name="Bean A."/>
            <person name="Pettersson R.F."/>
        </authorList>
    </citation>
    <scope>SUBCELLULAR LOCATION (GLYCOPROTEIN N)</scope>
    <scope>PALMITOYLATION (GLYCOPROTEIN N)</scope>
    <scope>MUTAGENESIS OF CYS-440 AND CYS-443</scope>
    <scope>DOMAIN (GLYCOPROTEIN N)</scope>
</reference>
<reference key="8">
    <citation type="journal article" date="1998" name="J. Virol.">
        <title>Targeting of a short peptide derived from the cytoplasmic tail of the G1 membrane glycoprotein of Uukuniemi virus (Bunyaviridae) to the Golgi complex.</title>
        <authorList>
            <person name="Andersson A.M."/>
            <person name="Pettersson R.F."/>
        </authorList>
    </citation>
    <scope>SUBCELLULAR LOCATION (GLYCOPROTEIN N)</scope>
    <scope>DOMAIN (GLYCOPROTEIN N)</scope>
</reference>
<reference key="9">
    <citation type="journal article" date="2007" name="J. Virol.">
        <title>The cytoplasmic tails of Uukuniemi Virus (Bunyaviridae) G(N) and G(C) glycoproteins are important for intracellular targeting and the budding of virus-like particles.</title>
        <authorList>
            <person name="Overby A.K."/>
            <person name="Popov V.L."/>
            <person name="Pettersson R.F."/>
            <person name="Neve E.P."/>
        </authorList>
    </citation>
    <scope>DOMAIN (GLYCOPROTEIN N)</scope>
    <scope>SUBUNIT</scope>
    <scope>SUBCELLULAR LOCATION (GLYCOPROTEIN N)</scope>
    <scope>SUBCELLULAR LOCATION (GLYCOPROTEIN C)</scope>
    <scope>MUTAGENESIS OF LEU-438; LEU-439 AND LYS-1006</scope>
    <scope>FUNCTION (GLYCOPROTEIN N)</scope>
</reference>
<reference key="10">
    <citation type="journal article" date="2007" name="J. Virol.">
        <title>The glycoprotein cytoplasmic tail of Uukuniemi virus (Bunyaviridae) interacts with ribonucleoproteins and is critical for genome packaging.</title>
        <authorList>
            <person name="Overby A.K."/>
            <person name="Pettersson R.F."/>
            <person name="Neve E.P."/>
        </authorList>
    </citation>
    <scope>DOMAIN (GLYCOPROTEIN N)</scope>
    <scope>FUNCTION (GLYCOPROTEIN N)</scope>
</reference>
<reference key="11">
    <citation type="journal article" date="2008" name="Proc. Natl. Acad. Sci. U.S.A.">
        <title>Insights into bunyavirus architecture from electron cryotomography of Uukuniemi virus.</title>
        <authorList>
            <person name="Overby A.K."/>
            <person name="Pettersson R.F."/>
            <person name="Gruenewald K."/>
            <person name="Huiskonen J.T."/>
        </authorList>
    </citation>
    <scope>STRUCTURE BY ELECTRON CRYOMICROSCOPY OF THE VIRAL PARTICLE</scope>
    <scope>FUNCTION (GLCOPROTEIN C)</scope>
</reference>
<reference key="12">
    <citation type="journal article" date="2010" name="Cell Host Microbe">
        <title>Entry of bunyaviruses into mammalian cells.</title>
        <authorList>
            <person name="Lozach P.Y."/>
            <person name="Mancini R."/>
            <person name="Bitto D."/>
            <person name="Meier R."/>
            <person name="Oestereich L."/>
            <person name="Overby A.K."/>
            <person name="Pettersson R.F."/>
            <person name="Helenius A."/>
        </authorList>
    </citation>
    <scope>FUNCTION (GLYCOPROTEIN C)</scope>
</reference>
<reference key="13">
    <citation type="journal article" date="2011" name="Cell Host Microbe">
        <title>DC-SIGN as a receptor for phleboviruses.</title>
        <authorList>
            <person name="Lozach P.Y."/>
            <person name="Kuehbacher A."/>
            <person name="Meier R."/>
            <person name="Mancini R."/>
            <person name="Bitto D."/>
            <person name="Bouloy M."/>
            <person name="Helenius A."/>
        </authorList>
    </citation>
    <scope>FUNCTION (GLYCOPROTEIN N)</scope>
    <scope>FUNCTION (GLYCOPROTEIN C)</scope>
</reference>
<reference key="14">
    <citation type="journal article" date="2014" name="J. Virol.">
        <title>Uukuniemi Phlebovirus assembly and secretion leave a functional imprint on the virion glycome.</title>
        <authorList>
            <person name="Crispin M."/>
            <person name="Harvey D.J."/>
            <person name="Bitto D."/>
            <person name="Halldorsson S."/>
            <person name="Bonomelli C."/>
            <person name="Edgeworth M."/>
            <person name="Scrivens J.H."/>
            <person name="Huiskonen J.T."/>
            <person name="Bowden T.A."/>
        </authorList>
    </citation>
    <scope>GLYCOSYLATION (GLYCOPROTEIN N)</scope>
    <scope>GLYCOSYLATION (GLYCOPROTEIN C)</scope>
</reference>
<organismHost>
    <name type="scientific">Homo sapiens</name>
    <name type="common">Human</name>
    <dbReference type="NCBI Taxonomy" id="9606"/>
</organismHost>
<organismHost>
    <name type="scientific">Ixodes ricinus</name>
    <name type="common">Common tick</name>
    <name type="synonym">Acarus ricinus</name>
    <dbReference type="NCBI Taxonomy" id="34613"/>
</organismHost>
<comment type="function">
    <molecule>Glycoprotein N</molecule>
    <text evidence="3 7 8 9 10 11">Structural component of the virion that interacts with glycoprotein C (PubMed:1988460). It shields the hydrophobic fusion loops of the glycoprotein C, preventing premature fusion (By similarity). The glycoprotein protrusions are arranged on an icosahedral lattice, with T=12 triangulation (PubMed:18272496). They are able to attach the virion to the host cell receptor CD209/DC-SIGN and to promote fusion of membranes with the late endosome after endocytosis of the virion (PubMed:20542252). Plays a role in the packaging of ribonucleoproteins during virus assembly (PubMed:17229712, PubMed:17670814).</text>
</comment>
<comment type="function">
    <molecule>Glycoprotein C</molecule>
    <text evidence="3 9 10 11">Structural component of the virion that interacts with glycoprotein N (PubMed:1988460). Acts as a class II fusion protein that is activated upon acidification and subsequent repositioning of the glycoprotein N (By similarity). The glycoprotein protrusions are arranged on an icosahedral lattice, with T=12 triangulation (PubMed:18272496). They are able to attach the virion to the host cell receptor CD209/DC-SIGN and to promote fusion of membranes with the late endosome after endocytosis of the virion (PubMed:20542252).</text>
</comment>
<comment type="subunit">
    <molecule>Glycoprotein N</molecule>
    <text evidence="2 6 8 10 15">Homodimer (PubMed:7645217). Heterodimer with glycoprotein C (PubMed:1602557, PubMed:17670814, PubMed:1988460). Homotrimer (postfusion) (By similarity).</text>
</comment>
<comment type="subunit">
    <molecule>Glycoprotein C</molecule>
    <text evidence="1 6 8 10">Heterodimer with glycoprotein N (PubMed:1602557, PubMed:17670814, PubMed:1988460). Homotrimer (postfusion) (By similarity).</text>
</comment>
<comment type="interaction">
    <interactant intactId="EBI-21497244">
        <id>P09613</id>
    </interactant>
    <interactant intactId="EBI-359050">
        <id>Q92538</id>
        <label>GBF1</label>
    </interactant>
    <organismsDiffer>true</organismsDiffer>
    <experiments>2</experiments>
</comment>
<comment type="subcellular location">
    <molecule>Glycoprotein N</molecule>
    <subcellularLocation>
        <location evidence="22">Virion membrane</location>
        <topology evidence="16">Single-pass type I membrane protein</topology>
    </subcellularLocation>
    <subcellularLocation>
        <location evidence="8 17 18 21 23">Host Golgi apparatus membrane</location>
        <topology evidence="16">Single-pass type I membrane protein</topology>
    </subcellularLocation>
    <subcellularLocation>
        <location evidence="22 23">Host endoplasmic reticulum membrane</location>
        <topology evidence="16">Single-pass type I membrane protein</topology>
    </subcellularLocation>
    <text evidence="6 14">Interaction between Glycoprotein N and Glycoprotein C is essential for proper targeting of Glycoprotein C to the Golgi complex, where virion budding occurs.</text>
</comment>
<comment type="subcellular location">
    <molecule>Glycoprotein C</molecule>
    <subcellularLocation>
        <location evidence="22">Virion membrane</location>
        <topology evidence="16">Single-pass type I membrane protein</topology>
    </subcellularLocation>
    <subcellularLocation>
        <location evidence="8 21 23">Host Golgi apparatus membrane</location>
        <topology evidence="16">Single-pass type I membrane protein</topology>
    </subcellularLocation>
    <subcellularLocation>
        <location evidence="22 23">Host endoplasmic reticulum membrane</location>
        <topology evidence="16">Single-pass type I membrane protein</topology>
    </subcellularLocation>
    <text evidence="6 14">Interaction between Glycoprotein N and Glycoprotein C is essential for proper targeting of Glycoprotein C to the Golgi complex, where virion budding occurs.</text>
</comment>
<comment type="domain">
    <molecule>Glycoprotein N</molecule>
    <text evidence="7 8 17 18">Contains a Golgi retention signal on its C-terminus (PubMed:17670814, PubMed:9151865, PubMed:9811692). The cytoplasmic tail specifically interacts with the ribonucleoproteins and is critical for genome packaging (PubMed:17229712, PubMed:17670814).</text>
</comment>
<comment type="PTM">
    <molecule>Envelopment polyprotein</molecule>
    <text evidence="16">Specific enzymatic cleavages in vivo yield mature proteins including glycoprotein C and glycoprotein N.</text>
</comment>
<comment type="PTM">
    <molecule>Glycoprotein N</molecule>
    <text evidence="16 17">The cytoplasmic tail is Palmitoylated.</text>
</comment>
<comment type="PTM">
    <molecule>Glycoprotein N</molecule>
    <text evidence="12">Glycosylated. Contains principally poly-N-acetyllactosamine glycans.</text>
</comment>
<comment type="PTM">
    <molecule>Glycoprotein C</molecule>
    <text evidence="12">Glycosylated. Contains principally oligomannose-type glycans that can attach to host CD209/DC-SIGN.</text>
</comment>
<comment type="PTM">
    <molecule>Glycoprotein C</molecule>
    <text evidence="16">Palmitoylated.</text>
</comment>
<comment type="similarity">
    <text evidence="20">Belongs to the phlebovirus envelope glycoprotein family.</text>
</comment>
<sequence length="1008" mass="113589">MVRTYLLLLLLCGPATPFFNHLMDVTRRLLDSSNATWQRDQPDTHRLSRLDAHVMSMLGVGSHIDEVSVNHSQHLHNFRSYNCEEGRRTLTMMDPKSGKFKRLKCNENQTLSKDCASCIEKKSSIMKSEHLVYDDAICQSDYSSPEAMPDHETHLCRIGPLHIQHCTHEAKRVQHVSWFWIDGKLRVYDDFSVSWTEGKFLSLFDCLNETSKDHNCNKAVCLEGRCSGDLQFCTEFTCSYAKADCNCKRNQVSGVAVVHTKHGSFMPECMGQSLWSVRKPLSKRSVTVQQPCMDCESDCKVDHILVIVRHFYPDHYQACLGSTCLTGRAKDKEFKIPFKMADRLSDSHFEIRIWDKERSNEYFLESRCESVDACAAITCWFCRANWANIHCFSKEQVLILVAVSSLCILLLASVLRALKVIATFTWKIIKPFWWILSLLCRTCSKRLNKRAERLKESIHSLEEGLNNVDEGPREQNNPARAVARPNVRQKMFNLTRLSPVVVGMLCLACPVESCSDSISVTASSQRCSTSSDGVNSCFVSTSSLLQVSPKGQESCLILKGPTGTAVDSIRIKTTDIKLECVRRDLYWVPRVTHRCIGTRRCHLMGACKGEACSEFKINDYSPEWGHEEELMAQLGWSYCVEQCGGALCQCFNMRPSCFYLRKTFSHLSQDAFNIYECSEWSYRINVLVSTNSTHSNLTLKLGVPDSIPHGLISLSSVSQPPAIAYSECFGEDLHGTKFHTVCNRRTDYTLGRIGEIQCPTKADALAVSKRCISSDSIIFSKVHKDSVDCQSSIIDPMTIRNRNKLPSTVGSVTFWPTETSVEAAIPDLASATMLIRLDGYTIQFRSDSNKCSPRFLSLSGCYNCEAGAKLELEHVTDFGTALGILECPSLGYTTYYEVKNTLEKSIRTMHLNGSHVEAKCYFRCPNSESQLTIRGELIYLFNDDIRHHNQTLSPGLSPKSGSGWDPFGWFKASWLRAIWAILGGTVSLIIGVVIIYMVFTLCLKVKKS</sequence>
<organism>
    <name type="scientific">Uukuniemi virus (strain S23)</name>
    <name type="common">UUKV</name>
    <dbReference type="NCBI Taxonomy" id="487099"/>
    <lineage>
        <taxon>Viruses</taxon>
        <taxon>Riboviria</taxon>
        <taxon>Orthornavirae</taxon>
        <taxon>Negarnaviricota</taxon>
        <taxon>Polyploviricotina</taxon>
        <taxon>Ellioviricetes</taxon>
        <taxon>Bunyavirales</taxon>
        <taxon>Phenuiviridae</taxon>
        <taxon>Phlebovirus</taxon>
        <taxon>Uukuniemi phlebovirus</taxon>
    </lineage>
</organism>